<reference key="1">
    <citation type="journal article" date="2008" name="Genome Res.">
        <title>Comparative genome analysis of Salmonella enteritidis PT4 and Salmonella gallinarum 287/91 provides insights into evolutionary and host adaptation pathways.</title>
        <authorList>
            <person name="Thomson N.R."/>
            <person name="Clayton D.J."/>
            <person name="Windhorst D."/>
            <person name="Vernikos G."/>
            <person name="Davidson S."/>
            <person name="Churcher C."/>
            <person name="Quail M.A."/>
            <person name="Stevens M."/>
            <person name="Jones M.A."/>
            <person name="Watson M."/>
            <person name="Barron A."/>
            <person name="Layton A."/>
            <person name="Pickard D."/>
            <person name="Kingsley R.A."/>
            <person name="Bignell A."/>
            <person name="Clark L."/>
            <person name="Harris B."/>
            <person name="Ormond D."/>
            <person name="Abdellah Z."/>
            <person name="Brooks K."/>
            <person name="Cherevach I."/>
            <person name="Chillingworth T."/>
            <person name="Woodward J."/>
            <person name="Norberczak H."/>
            <person name="Lord A."/>
            <person name="Arrowsmith C."/>
            <person name="Jagels K."/>
            <person name="Moule S."/>
            <person name="Mungall K."/>
            <person name="Saunders M."/>
            <person name="Whitehead S."/>
            <person name="Chabalgoity J.A."/>
            <person name="Maskell D."/>
            <person name="Humphreys T."/>
            <person name="Roberts M."/>
            <person name="Barrow P.A."/>
            <person name="Dougan G."/>
            <person name="Parkhill J."/>
        </authorList>
    </citation>
    <scope>NUCLEOTIDE SEQUENCE [LARGE SCALE GENOMIC DNA]</scope>
    <source>
        <strain>P125109</strain>
    </source>
</reference>
<accession>B5R1G1</accession>
<dbReference type="EMBL" id="AM933172">
    <property type="protein sequence ID" value="CAR34827.1"/>
    <property type="molecule type" value="Genomic_DNA"/>
</dbReference>
<dbReference type="RefSeq" id="WP_000358956.1">
    <property type="nucleotide sequence ID" value="NC_011294.1"/>
</dbReference>
<dbReference type="SMR" id="B5R1G1"/>
<dbReference type="GeneID" id="93035747"/>
<dbReference type="KEGG" id="set:SEN3252"/>
<dbReference type="HOGENOM" id="CLU_098841_0_1_6"/>
<dbReference type="Proteomes" id="UP000000613">
    <property type="component" value="Chromosome"/>
</dbReference>
<dbReference type="GO" id="GO:0022625">
    <property type="term" value="C:cytosolic large ribosomal subunit"/>
    <property type="evidence" value="ECO:0007669"/>
    <property type="project" value="TreeGrafter"/>
</dbReference>
<dbReference type="GO" id="GO:0008097">
    <property type="term" value="F:5S rRNA binding"/>
    <property type="evidence" value="ECO:0007669"/>
    <property type="project" value="TreeGrafter"/>
</dbReference>
<dbReference type="GO" id="GO:0003735">
    <property type="term" value="F:structural constituent of ribosome"/>
    <property type="evidence" value="ECO:0007669"/>
    <property type="project" value="InterPro"/>
</dbReference>
<dbReference type="GO" id="GO:0006412">
    <property type="term" value="P:translation"/>
    <property type="evidence" value="ECO:0007669"/>
    <property type="project" value="UniProtKB-UniRule"/>
</dbReference>
<dbReference type="CDD" id="cd00432">
    <property type="entry name" value="Ribosomal_L18_L5e"/>
    <property type="match status" value="1"/>
</dbReference>
<dbReference type="FunFam" id="3.30.420.100:FF:000001">
    <property type="entry name" value="50S ribosomal protein L18"/>
    <property type="match status" value="1"/>
</dbReference>
<dbReference type="Gene3D" id="3.30.420.100">
    <property type="match status" value="1"/>
</dbReference>
<dbReference type="HAMAP" id="MF_01337_B">
    <property type="entry name" value="Ribosomal_uL18_B"/>
    <property type="match status" value="1"/>
</dbReference>
<dbReference type="InterPro" id="IPR004389">
    <property type="entry name" value="Ribosomal_uL18_bac-type"/>
</dbReference>
<dbReference type="InterPro" id="IPR005484">
    <property type="entry name" value="Ribosomal_uL18_bac/euk"/>
</dbReference>
<dbReference type="NCBIfam" id="TIGR00060">
    <property type="entry name" value="L18_bact"/>
    <property type="match status" value="1"/>
</dbReference>
<dbReference type="PANTHER" id="PTHR12899">
    <property type="entry name" value="39S RIBOSOMAL PROTEIN L18, MITOCHONDRIAL"/>
    <property type="match status" value="1"/>
</dbReference>
<dbReference type="PANTHER" id="PTHR12899:SF3">
    <property type="entry name" value="LARGE RIBOSOMAL SUBUNIT PROTEIN UL18M"/>
    <property type="match status" value="1"/>
</dbReference>
<dbReference type="Pfam" id="PF00861">
    <property type="entry name" value="Ribosomal_L18p"/>
    <property type="match status" value="1"/>
</dbReference>
<dbReference type="SUPFAM" id="SSF53137">
    <property type="entry name" value="Translational machinery components"/>
    <property type="match status" value="1"/>
</dbReference>
<gene>
    <name evidence="1" type="primary">rplR</name>
    <name type="ordered locus">SEN3252</name>
</gene>
<proteinExistence type="inferred from homology"/>
<comment type="function">
    <text evidence="1">This is one of the proteins that bind and probably mediate the attachment of the 5S RNA into the large ribosomal subunit, where it forms part of the central protuberance.</text>
</comment>
<comment type="subunit">
    <text evidence="1">Part of the 50S ribosomal subunit; part of the 5S rRNA/L5/L18/L25 subcomplex. Contacts the 5S and 23S rRNAs.</text>
</comment>
<comment type="similarity">
    <text evidence="1">Belongs to the universal ribosomal protein uL18 family.</text>
</comment>
<evidence type="ECO:0000255" key="1">
    <source>
        <dbReference type="HAMAP-Rule" id="MF_01337"/>
    </source>
</evidence>
<evidence type="ECO:0000305" key="2"/>
<organism>
    <name type="scientific">Salmonella enteritidis PT4 (strain P125109)</name>
    <dbReference type="NCBI Taxonomy" id="550537"/>
    <lineage>
        <taxon>Bacteria</taxon>
        <taxon>Pseudomonadati</taxon>
        <taxon>Pseudomonadota</taxon>
        <taxon>Gammaproteobacteria</taxon>
        <taxon>Enterobacterales</taxon>
        <taxon>Enterobacteriaceae</taxon>
        <taxon>Salmonella</taxon>
    </lineage>
</organism>
<keyword id="KW-0687">Ribonucleoprotein</keyword>
<keyword id="KW-0689">Ribosomal protein</keyword>
<keyword id="KW-0694">RNA-binding</keyword>
<keyword id="KW-0699">rRNA-binding</keyword>
<sequence length="117" mass="12770">MDKKSARIRRATRARRKLKELGATRLVVHRTPRHIYAQVIAPNGSEVLVAASTVEKAIAEQLKYTGNKDAAAAVGKAVAERALEKGIKDVSFDRSGFQYHGRVQALADAAREAGLQF</sequence>
<name>RL18_SALEP</name>
<feature type="chain" id="PRO_1000142713" description="Large ribosomal subunit protein uL18">
    <location>
        <begin position="1"/>
        <end position="117"/>
    </location>
</feature>
<protein>
    <recommendedName>
        <fullName evidence="1">Large ribosomal subunit protein uL18</fullName>
    </recommendedName>
    <alternativeName>
        <fullName evidence="2">50S ribosomal protein L18</fullName>
    </alternativeName>
</protein>